<name>CUD6_SCHGR</name>
<accession>Q7M4E8</accession>
<keyword id="KW-0193">Cuticle</keyword>
<keyword id="KW-0903">Direct protein sequencing</keyword>
<keyword id="KW-0873">Pyrrolidone carboxylic acid</keyword>
<protein>
    <recommendedName>
        <fullName>Endocuticle structural protein SgAbd-6</fullName>
    </recommendedName>
</protein>
<dbReference type="PIR" id="S78095">
    <property type="entry name" value="S78095"/>
</dbReference>
<dbReference type="OrthoDB" id="6815232at2759"/>
<dbReference type="GO" id="GO:0062129">
    <property type="term" value="C:chitin-based extracellular matrix"/>
    <property type="evidence" value="ECO:0007669"/>
    <property type="project" value="TreeGrafter"/>
</dbReference>
<dbReference type="GO" id="GO:0008010">
    <property type="term" value="F:structural constituent of chitin-based larval cuticle"/>
    <property type="evidence" value="ECO:0007669"/>
    <property type="project" value="TreeGrafter"/>
</dbReference>
<dbReference type="InterPro" id="IPR031311">
    <property type="entry name" value="CHIT_BIND_RR_consensus"/>
</dbReference>
<dbReference type="InterPro" id="IPR050468">
    <property type="entry name" value="Cuticle_Struct_Prot"/>
</dbReference>
<dbReference type="InterPro" id="IPR000618">
    <property type="entry name" value="Insect_cuticle"/>
</dbReference>
<dbReference type="PANTHER" id="PTHR10380:SF218">
    <property type="entry name" value="ADULT CUTICLE PROTEIN 65AA-RELATED"/>
    <property type="match status" value="1"/>
</dbReference>
<dbReference type="PANTHER" id="PTHR10380">
    <property type="entry name" value="CUTICLE PROTEIN"/>
    <property type="match status" value="1"/>
</dbReference>
<dbReference type="Pfam" id="PF00379">
    <property type="entry name" value="Chitin_bind_4"/>
    <property type="match status" value="1"/>
</dbReference>
<dbReference type="PRINTS" id="PR00947">
    <property type="entry name" value="CUTICLE"/>
</dbReference>
<dbReference type="PROSITE" id="PS00233">
    <property type="entry name" value="CHIT_BIND_RR_1"/>
    <property type="match status" value="1"/>
</dbReference>
<dbReference type="PROSITE" id="PS51155">
    <property type="entry name" value="CHIT_BIND_RR_2"/>
    <property type="match status" value="1"/>
</dbReference>
<sequence length="82" mass="9027">QKPGEAVILEQSIDNDGLGQYTFGFKTSDGLIRQEQGVVKNQGTENEALEVRGTITWLGADGKDYSINFVADENGFQPQYTQ</sequence>
<feature type="chain" id="PRO_0000196123" description="Endocuticle structural protein SgAbd-6">
    <location>
        <begin position="1"/>
        <end position="82"/>
    </location>
</feature>
<feature type="domain" description="Chitin-binding type R&amp;R" evidence="1">
    <location>
        <begin position="18"/>
        <end position="82"/>
    </location>
</feature>
<feature type="modified residue" description="Pyrrolidone carboxylic acid" evidence="2">
    <location>
        <position position="1"/>
    </location>
</feature>
<evidence type="ECO:0000255" key="1">
    <source>
        <dbReference type="PROSITE-ProRule" id="PRU00497"/>
    </source>
</evidence>
<evidence type="ECO:0000269" key="2">
    <source>
    </source>
</evidence>
<organism>
    <name type="scientific">Schistocerca gregaria</name>
    <name type="common">Desert locust</name>
    <name type="synonym">Gryllus gregarius</name>
    <dbReference type="NCBI Taxonomy" id="7010"/>
    <lineage>
        <taxon>Eukaryota</taxon>
        <taxon>Metazoa</taxon>
        <taxon>Ecdysozoa</taxon>
        <taxon>Arthropoda</taxon>
        <taxon>Hexapoda</taxon>
        <taxon>Insecta</taxon>
        <taxon>Pterygota</taxon>
        <taxon>Neoptera</taxon>
        <taxon>Polyneoptera</taxon>
        <taxon>Orthoptera</taxon>
        <taxon>Caelifera</taxon>
        <taxon>Acrididea</taxon>
        <taxon>Acridomorpha</taxon>
        <taxon>Acridoidea</taxon>
        <taxon>Acrididae</taxon>
        <taxon>Cyrtacanthacridinae</taxon>
        <taxon>Schistocerca</taxon>
    </lineage>
</organism>
<reference key="1">
    <citation type="journal article" date="1998" name="Insect Biochem. Mol. Biol.">
        <title>Amino acid sequence studies on endocuticular proteins from the desert locust, Schistocerca gregaria.</title>
        <authorList>
            <person name="Andersen S.O."/>
        </authorList>
    </citation>
    <scope>PROTEIN SEQUENCE</scope>
    <scope>PYROGLUTAMATE FORMATION AT GLN-1</scope>
    <scope>POST-TRANSLATIONAL MODIFICATIONS</scope>
    <source>
        <strain>Albino</strain>
        <tissue>Cuticle</tissue>
    </source>
</reference>
<comment type="function">
    <text>Component of the abdominal endocuticle.</text>
</comment>
<proteinExistence type="evidence at protein level"/>